<reference evidence="4" key="1">
    <citation type="submission" date="2001-09" db="EMBL/GenBank/DDBJ databases">
        <title>Circadian clock gene in Anabaena sp. strain PCC 7120.</title>
        <authorList>
            <person name="Uzumaki T."/>
            <person name="Nakahira Y."/>
            <person name="Hayashi F."/>
            <person name="Fujita M."/>
            <person name="Wolk C.P."/>
            <person name="Kondo T."/>
            <person name="Ishiura M."/>
        </authorList>
    </citation>
    <scope>NUCLEOTIDE SEQUENCE [GENOMIC DNA]</scope>
    <source>
        <strain>PCC 7120 / SAG 25.82 / UTEX 2576</strain>
    </source>
</reference>
<reference evidence="3" key="2">
    <citation type="journal article" date="2001" name="DNA Res.">
        <title>Complete genomic sequence of the filamentous nitrogen-fixing cyanobacterium Anabaena sp. strain PCC 7120.</title>
        <authorList>
            <person name="Kaneko T."/>
            <person name="Nakamura Y."/>
            <person name="Wolk C.P."/>
            <person name="Kuritz T."/>
            <person name="Sasamoto S."/>
            <person name="Watanabe A."/>
            <person name="Iriguchi M."/>
            <person name="Ishikawa A."/>
            <person name="Kawashima K."/>
            <person name="Kimura T."/>
            <person name="Kishida Y."/>
            <person name="Kohara M."/>
            <person name="Matsumoto M."/>
            <person name="Matsuno A."/>
            <person name="Muraki A."/>
            <person name="Nakazaki N."/>
            <person name="Shimpo S."/>
            <person name="Sugimoto M."/>
            <person name="Takazawa M."/>
            <person name="Yamada M."/>
            <person name="Yasuda M."/>
            <person name="Tabata S."/>
        </authorList>
    </citation>
    <scope>NUCLEOTIDE SEQUENCE [LARGE SCALE GENOMIC DNA]</scope>
    <source>
        <strain>PCC 7120 / SAG 25.82 / UTEX 2576</strain>
    </source>
</reference>
<comment type="function">
    <text evidence="1">Central component of the KaiABC oscillator complex, which constitutes the main circadian regulator in cyanobacteria. Complex composition changes during the circadian cycle to control KaiC phosphorylation. KaiA stimulates KaiC autophosphorylation, while KaiB sequesters KaiA, leading to KaiC autodephosphorylation. Clock output pathways impact the RpaA transcriptional regulator. KaiC enhances the autophosphorylation activity of SasA, which then transfers its phosphate group to RpaA to activate it. KaiB and KaiC together enhance the phospho-RpaA dephosphatase activity of CikA.</text>
</comment>
<comment type="function">
    <text evidence="1">Has a weak, temperature-independent ATPase activity; ATPase activity defines the circadian period. The phosphorylation state of KaiC modulates its ATPase activity and effects KaiB binding.</text>
</comment>
<comment type="catalytic activity">
    <reaction evidence="1">
        <text>L-seryl-[protein] + ATP = O-phospho-L-seryl-[protein] + ADP + H(+)</text>
        <dbReference type="Rhea" id="RHEA:17989"/>
        <dbReference type="Rhea" id="RHEA-COMP:9863"/>
        <dbReference type="Rhea" id="RHEA-COMP:11604"/>
        <dbReference type="ChEBI" id="CHEBI:15378"/>
        <dbReference type="ChEBI" id="CHEBI:29999"/>
        <dbReference type="ChEBI" id="CHEBI:30616"/>
        <dbReference type="ChEBI" id="CHEBI:83421"/>
        <dbReference type="ChEBI" id="CHEBI:456216"/>
        <dbReference type="EC" id="2.7.11.1"/>
    </reaction>
</comment>
<comment type="catalytic activity">
    <reaction evidence="1">
        <text>L-threonyl-[protein] + ATP = O-phospho-L-threonyl-[protein] + ADP + H(+)</text>
        <dbReference type="Rhea" id="RHEA:46608"/>
        <dbReference type="Rhea" id="RHEA-COMP:11060"/>
        <dbReference type="Rhea" id="RHEA-COMP:11605"/>
        <dbReference type="ChEBI" id="CHEBI:15378"/>
        <dbReference type="ChEBI" id="CHEBI:30013"/>
        <dbReference type="ChEBI" id="CHEBI:30616"/>
        <dbReference type="ChEBI" id="CHEBI:61977"/>
        <dbReference type="ChEBI" id="CHEBI:456216"/>
        <dbReference type="EC" id="2.7.11.1"/>
    </reaction>
</comment>
<comment type="catalytic activity">
    <reaction evidence="1">
        <text>ATP + H2O = ADP + phosphate + H(+)</text>
        <dbReference type="Rhea" id="RHEA:13065"/>
        <dbReference type="ChEBI" id="CHEBI:15377"/>
        <dbReference type="ChEBI" id="CHEBI:15378"/>
        <dbReference type="ChEBI" id="CHEBI:30616"/>
        <dbReference type="ChEBI" id="CHEBI:43474"/>
        <dbReference type="ChEBI" id="CHEBI:456216"/>
    </reaction>
</comment>
<comment type="cofactor">
    <cofactor evidence="1">
        <name>Mg(2+)</name>
        <dbReference type="ChEBI" id="CHEBI:18420"/>
    </cofactor>
    <text evidence="1">Binds 2 Mg(2+) ions per subunit, one in each domain. Mg(2+) is required for hexamerization and phosphatase activity.</text>
</comment>
<comment type="activity regulation">
    <text evidence="1">The interaction with KaiA enhances its phosphorylation status, while the interaction with KaiB decreases it.</text>
</comment>
<comment type="subunit">
    <text evidence="1">Homohexamer; hexamerization is dependent on ATP-binding. The KaiABC complex composition changes during the circadian cycle to control KaiC phosphorylation. Complexes KaiC(6), KaiA(2-4):KaiC(6), KaiB(6):KaiC(6) and KaiC(6):KaiB(6):KaiA(12) are among the most important forms, many form cooperatively. KaiC interacts with SasA, activating its autokinase function and leading to RpaA activation.</text>
</comment>
<comment type="domain">
    <text evidence="1">In the homohexamer the 2 domains (called CI and CII) self-associate to each form a 'donut' layer; the compactness and local conformation of the domains varies over the cell cycle and impacts function. CII has the autokinase and autophosphatase activities, both CI and CII have (weak) ATPase activity; CI has the clock pacemaker role.</text>
</comment>
<comment type="PTM">
    <text evidence="1">Phosphorylated on serine and threonine residues by autocatalysis. Has a 4 step phosphorylation cycle; the autokinase acts first on Thr-431, then Ser-430. When Ser-430 is modified KaiC switches to an autophosphatase mode, acting first on phospho-Thr-431 then phospho-Ser-430.</text>
</comment>
<comment type="similarity">
    <text evidence="1">Belongs to the KaiC family.</text>
</comment>
<name>KAIC_NOSS1</name>
<feature type="chain" id="PRO_0000217775" description="Circadian clock oscillator protein KaiC">
    <location>
        <begin position="1"/>
        <end position="519"/>
    </location>
</feature>
<feature type="domain" description="KaiC 1" evidence="1">
    <location>
        <begin position="1"/>
        <end position="246"/>
    </location>
</feature>
<feature type="domain" description="KaiC 2" evidence="1">
    <location>
        <begin position="260"/>
        <end position="519"/>
    </location>
</feature>
<feature type="binding site" evidence="1">
    <location>
        <position position="48"/>
    </location>
    <ligand>
        <name>ATP</name>
        <dbReference type="ChEBI" id="CHEBI:30616"/>
        <label>1</label>
        <note>ligand shared between homodimeric partners</note>
    </ligand>
</feature>
<feature type="binding site" evidence="1">
    <location>
        <position position="49"/>
    </location>
    <ligand>
        <name>ATP</name>
        <dbReference type="ChEBI" id="CHEBI:30616"/>
        <label>1</label>
        <note>ligand shared between homodimeric partners</note>
    </ligand>
</feature>
<feature type="binding site" evidence="1">
    <location>
        <position position="50"/>
    </location>
    <ligand>
        <name>ATP</name>
        <dbReference type="ChEBI" id="CHEBI:30616"/>
        <label>1</label>
        <note>ligand shared between homodimeric partners</note>
    </ligand>
</feature>
<feature type="binding site" evidence="1">
    <location>
        <position position="51"/>
    </location>
    <ligand>
        <name>ATP</name>
        <dbReference type="ChEBI" id="CHEBI:30616"/>
        <label>1</label>
        <note>ligand shared between homodimeric partners</note>
    </ligand>
</feature>
<feature type="binding site" evidence="1">
    <location>
        <position position="52"/>
    </location>
    <ligand>
        <name>ATP</name>
        <dbReference type="ChEBI" id="CHEBI:30616"/>
        <label>1</label>
        <note>ligand shared between homodimeric partners</note>
    </ligand>
</feature>
<feature type="binding site" evidence="1">
    <location>
        <position position="52"/>
    </location>
    <ligand>
        <name>Mg(2+)</name>
        <dbReference type="ChEBI" id="CHEBI:18420"/>
        <label>1</label>
    </ligand>
</feature>
<feature type="binding site" evidence="1">
    <location>
        <position position="53"/>
    </location>
    <ligand>
        <name>ATP</name>
        <dbReference type="ChEBI" id="CHEBI:30616"/>
        <label>1</label>
        <note>ligand shared between homodimeric partners</note>
    </ligand>
</feature>
<feature type="binding site" evidence="1">
    <location>
        <position position="223"/>
    </location>
    <ligand>
        <name>ATP</name>
        <dbReference type="ChEBI" id="CHEBI:30616"/>
        <label>1</label>
        <note>ligand shared between homodimeric partners</note>
    </ligand>
</feature>
<feature type="binding site" evidence="1">
    <location>
        <position position="224"/>
    </location>
    <ligand>
        <name>ATP</name>
        <dbReference type="ChEBI" id="CHEBI:30616"/>
        <label>1</label>
        <note>ligand shared between homodimeric partners</note>
    </ligand>
</feature>
<feature type="binding site" evidence="1">
    <location>
        <position position="225"/>
    </location>
    <ligand>
        <name>ATP</name>
        <dbReference type="ChEBI" id="CHEBI:30616"/>
        <label>1</label>
        <note>ligand shared between homodimeric partners</note>
    </ligand>
</feature>
<feature type="binding site" evidence="1">
    <location>
        <position position="227"/>
    </location>
    <ligand>
        <name>ATP</name>
        <dbReference type="ChEBI" id="CHEBI:30616"/>
        <label>1</label>
        <note>ligand shared between homodimeric partners</note>
    </ligand>
</feature>
<feature type="binding site" evidence="1">
    <location>
        <position position="229"/>
    </location>
    <ligand>
        <name>ATP</name>
        <dbReference type="ChEBI" id="CHEBI:30616"/>
        <label>1</label>
        <note>ligand shared between homodimeric partners</note>
    </ligand>
</feature>
<feature type="binding site" evidence="1">
    <location>
        <position position="239"/>
    </location>
    <ligand>
        <name>ATP</name>
        <dbReference type="ChEBI" id="CHEBI:30616"/>
        <label>1</label>
        <note>ligand shared between homodimeric partners</note>
    </ligand>
</feature>
<feature type="binding site" evidence="1">
    <location>
        <position position="289"/>
    </location>
    <ligand>
        <name>ATP</name>
        <dbReference type="ChEBI" id="CHEBI:30616"/>
        <label>2</label>
        <note>ligand shared between homodimeric partners</note>
    </ligand>
</feature>
<feature type="binding site" evidence="1">
    <location>
        <position position="290"/>
    </location>
    <ligand>
        <name>ATP</name>
        <dbReference type="ChEBI" id="CHEBI:30616"/>
        <label>2</label>
        <note>ligand shared between homodimeric partners</note>
    </ligand>
</feature>
<feature type="binding site" evidence="1">
    <location>
        <position position="291"/>
    </location>
    <ligand>
        <name>ATP</name>
        <dbReference type="ChEBI" id="CHEBI:30616"/>
        <label>2</label>
        <note>ligand shared between homodimeric partners</note>
    </ligand>
</feature>
<feature type="binding site" evidence="1">
    <location>
        <position position="292"/>
    </location>
    <ligand>
        <name>ATP</name>
        <dbReference type="ChEBI" id="CHEBI:30616"/>
        <label>2</label>
        <note>ligand shared between homodimeric partners</note>
    </ligand>
</feature>
<feature type="binding site" evidence="1">
    <location>
        <position position="293"/>
    </location>
    <ligand>
        <name>ATP</name>
        <dbReference type="ChEBI" id="CHEBI:30616"/>
        <label>2</label>
        <note>ligand shared between homodimeric partners</note>
    </ligand>
</feature>
<feature type="binding site" evidence="1">
    <location>
        <position position="294"/>
    </location>
    <ligand>
        <name>ATP</name>
        <dbReference type="ChEBI" id="CHEBI:30616"/>
        <label>2</label>
        <note>ligand shared between homodimeric partners</note>
    </ligand>
</feature>
<feature type="binding site" evidence="1">
    <location>
        <position position="294"/>
    </location>
    <ligand>
        <name>Mg(2+)</name>
        <dbReference type="ChEBI" id="CHEBI:18420"/>
        <label>2</label>
    </ligand>
</feature>
<feature type="binding site" evidence="1">
    <location>
        <position position="295"/>
    </location>
    <ligand>
        <name>ATP</name>
        <dbReference type="ChEBI" id="CHEBI:30616"/>
        <label>2</label>
        <note>ligand shared between homodimeric partners</note>
    </ligand>
</feature>
<feature type="binding site" evidence="1">
    <location>
        <position position="317"/>
    </location>
    <ligand>
        <name>Mg(2+)</name>
        <dbReference type="ChEBI" id="CHEBI:18420"/>
        <label>2</label>
    </ligand>
</feature>
<feature type="binding site" evidence="1">
    <location>
        <position position="330"/>
    </location>
    <ligand>
        <name>ATP</name>
        <dbReference type="ChEBI" id="CHEBI:30616"/>
        <label>2</label>
        <note>ligand shared between homodimeric partners</note>
    </ligand>
</feature>
<feature type="binding site" evidence="1">
    <location>
        <position position="450"/>
    </location>
    <ligand>
        <name>ATP</name>
        <dbReference type="ChEBI" id="CHEBI:30616"/>
        <label>2</label>
        <note>ligand shared between homodimeric partners</note>
    </ligand>
</feature>
<feature type="binding site" evidence="1">
    <location>
        <position position="456"/>
    </location>
    <ligand>
        <name>ATP</name>
        <dbReference type="ChEBI" id="CHEBI:30616"/>
        <label>2</label>
        <note>ligand shared between homodimeric partners</note>
    </ligand>
</feature>
<feature type="binding site" evidence="1">
    <location>
        <position position="457"/>
    </location>
    <ligand>
        <name>ATP</name>
        <dbReference type="ChEBI" id="CHEBI:30616"/>
        <label>2</label>
        <note>ligand shared between homodimeric partners</note>
    </ligand>
</feature>
<feature type="binding site" evidence="1">
    <location>
        <position position="458"/>
    </location>
    <ligand>
        <name>ATP</name>
        <dbReference type="ChEBI" id="CHEBI:30616"/>
        <label>2</label>
        <note>ligand shared between homodimeric partners</note>
    </ligand>
</feature>
<feature type="binding site" evidence="1">
    <location>
        <position position="460"/>
    </location>
    <ligand>
        <name>ATP</name>
        <dbReference type="ChEBI" id="CHEBI:30616"/>
        <label>2</label>
        <note>ligand shared between homodimeric partners</note>
    </ligand>
</feature>
<feature type="binding site" evidence="1">
    <location>
        <position position="462"/>
    </location>
    <ligand>
        <name>ATP</name>
        <dbReference type="ChEBI" id="CHEBI:30616"/>
        <label>2</label>
        <note>ligand shared between homodimeric partners</note>
    </ligand>
</feature>
<feature type="binding site" evidence="1">
    <location>
        <position position="464"/>
    </location>
    <ligand>
        <name>ATP</name>
        <dbReference type="ChEBI" id="CHEBI:30616"/>
        <label>2</label>
        <note>ligand shared between homodimeric partners</note>
    </ligand>
</feature>
<feature type="modified residue" description="Phosphoserine; by autocatalysis" evidence="1">
    <location>
        <position position="430"/>
    </location>
</feature>
<feature type="modified residue" description="Phosphothreonine; by autocatalysis" evidence="1">
    <location>
        <position position="431"/>
    </location>
</feature>
<organism>
    <name type="scientific">Nostoc sp. (strain PCC 7120 / SAG 25.82 / UTEX 2576)</name>
    <dbReference type="NCBI Taxonomy" id="103690"/>
    <lineage>
        <taxon>Bacteria</taxon>
        <taxon>Bacillati</taxon>
        <taxon>Cyanobacteriota</taxon>
        <taxon>Cyanophyceae</taxon>
        <taxon>Nostocales</taxon>
        <taxon>Nostocaceae</taxon>
        <taxon>Nostoc</taxon>
    </lineage>
</organism>
<keyword id="KW-0067">ATP-binding</keyword>
<keyword id="KW-0090">Biological rhythms</keyword>
<keyword id="KW-0378">Hydrolase</keyword>
<keyword id="KW-0418">Kinase</keyword>
<keyword id="KW-0460">Magnesium</keyword>
<keyword id="KW-0479">Metal-binding</keyword>
<keyword id="KW-0547">Nucleotide-binding</keyword>
<keyword id="KW-0597">Phosphoprotein</keyword>
<keyword id="KW-1185">Reference proteome</keyword>
<keyword id="KW-0677">Repeat</keyword>
<keyword id="KW-0723">Serine/threonine-protein kinase</keyword>
<keyword id="KW-0804">Transcription</keyword>
<keyword id="KW-0805">Transcription regulation</keyword>
<keyword id="KW-0808">Transferase</keyword>
<proteinExistence type="inferred from homology"/>
<sequence length="519" mass="57920">MSEKEQQEQQNTSGNGVEKIRTMIEGFDDISHGGLPVGRTTLVSGTSGTGKTLLSLQFLFNGISFFDEPGVFVTFEESPSDIIKNAHIFGWNLQRLINEGKLFILDASPDPEGQDIVGNFDLSALIERLQYAIRKYKAKRVSIDSITAVFQQYEAVGVVRREIFRLVARLKQLNVTTIITTERSEEYGPVASFGVEEFVSDNVVIARNVLEGERRRRTIEILKLRGTTHMKGEYPFTITNDGVNIFPLGAMRLTQRSSNVRVSSGVKTLDGMCGGGFFKDSIILATGATGTGKTLLVSKFLQNGCVNNERAILFAYEESRAQLSRNAYSWGIDFEELESQGLLKIICTYPESTGLEDHLQIIKSEIAYFKPARIAIDSLSALARGVSNNAFRQFVIGVTGYAKQEEITGFFTNTTDQFMGSHSITDSHISTITDTILMLQYVEIRGEMSRAINVFKMRGSWHDKGIREYNITADGPEIQDSFRNYERIVSGSPTRVSIDEKAELSRIVRRFEDKQGSDS</sequence>
<protein>
    <recommendedName>
        <fullName evidence="1">Circadian clock oscillator protein KaiC</fullName>
        <ecNumber evidence="1">2.7.11.1</ecNumber>
        <ecNumber evidence="1">3.6.4.-</ecNumber>
    </recommendedName>
</protein>
<accession>Q8YT40</accession>
<dbReference type="EC" id="2.7.11.1" evidence="1"/>
<dbReference type="EC" id="3.6.4.-" evidence="1"/>
<dbReference type="EMBL" id="AB071284">
    <property type="protein sequence ID" value="BAB85869.1"/>
    <property type="molecule type" value="Genomic_DNA"/>
</dbReference>
<dbReference type="EMBL" id="BA000019">
    <property type="protein sequence ID" value="BAB74585.1"/>
    <property type="molecule type" value="Genomic_DNA"/>
</dbReference>
<dbReference type="PIR" id="AG2166">
    <property type="entry name" value="AG2166"/>
</dbReference>
<dbReference type="RefSeq" id="WP_010997037.1">
    <property type="nucleotide sequence ID" value="NZ_RSCN01000003.1"/>
</dbReference>
<dbReference type="SMR" id="Q8YT40"/>
<dbReference type="STRING" id="103690.gene:10494920"/>
<dbReference type="KEGG" id="ana:alr2886"/>
<dbReference type="eggNOG" id="COG0467">
    <property type="taxonomic scope" value="Bacteria"/>
</dbReference>
<dbReference type="OrthoDB" id="9787927at2"/>
<dbReference type="Proteomes" id="UP000002483">
    <property type="component" value="Chromosome"/>
</dbReference>
<dbReference type="GO" id="GO:0005524">
    <property type="term" value="F:ATP binding"/>
    <property type="evidence" value="ECO:0007669"/>
    <property type="project" value="UniProtKB-UniRule"/>
</dbReference>
<dbReference type="GO" id="GO:0016887">
    <property type="term" value="F:ATP hydrolysis activity"/>
    <property type="evidence" value="ECO:0007669"/>
    <property type="project" value="RHEA"/>
</dbReference>
<dbReference type="GO" id="GO:0003677">
    <property type="term" value="F:DNA binding"/>
    <property type="evidence" value="ECO:0007669"/>
    <property type="project" value="InterPro"/>
</dbReference>
<dbReference type="GO" id="GO:0000287">
    <property type="term" value="F:magnesium ion binding"/>
    <property type="evidence" value="ECO:0007669"/>
    <property type="project" value="UniProtKB-UniRule"/>
</dbReference>
<dbReference type="GO" id="GO:0106310">
    <property type="term" value="F:protein serine kinase activity"/>
    <property type="evidence" value="ECO:0007669"/>
    <property type="project" value="RHEA"/>
</dbReference>
<dbReference type="GO" id="GO:0004674">
    <property type="term" value="F:protein serine/threonine kinase activity"/>
    <property type="evidence" value="ECO:0007669"/>
    <property type="project" value="UniProtKB-KW"/>
</dbReference>
<dbReference type="GO" id="GO:0004712">
    <property type="term" value="F:protein serine/threonine/tyrosine kinase activity"/>
    <property type="evidence" value="ECO:0007669"/>
    <property type="project" value="UniProtKB-UniRule"/>
</dbReference>
<dbReference type="GO" id="GO:0007623">
    <property type="term" value="P:circadian rhythm"/>
    <property type="evidence" value="ECO:0007669"/>
    <property type="project" value="UniProtKB-UniRule"/>
</dbReference>
<dbReference type="GO" id="GO:0042752">
    <property type="term" value="P:regulation of circadian rhythm"/>
    <property type="evidence" value="ECO:0007669"/>
    <property type="project" value="InterPro"/>
</dbReference>
<dbReference type="GO" id="GO:0006355">
    <property type="term" value="P:regulation of DNA-templated transcription"/>
    <property type="evidence" value="ECO:0007669"/>
    <property type="project" value="InterPro"/>
</dbReference>
<dbReference type="CDD" id="cd19485">
    <property type="entry name" value="KaiC-N"/>
    <property type="match status" value="1"/>
</dbReference>
<dbReference type="CDD" id="cd19484">
    <property type="entry name" value="KaiC_C"/>
    <property type="match status" value="1"/>
</dbReference>
<dbReference type="FunFam" id="3.40.50.300:FF:001364">
    <property type="entry name" value="Circadian clock protein kinase KaiC"/>
    <property type="match status" value="1"/>
</dbReference>
<dbReference type="Gene3D" id="3.40.50.300">
    <property type="entry name" value="P-loop containing nucleotide triphosphate hydrolases"/>
    <property type="match status" value="2"/>
</dbReference>
<dbReference type="HAMAP" id="MF_01836">
    <property type="entry name" value="KaiC"/>
    <property type="match status" value="1"/>
</dbReference>
<dbReference type="InterPro" id="IPR051347">
    <property type="entry name" value="Circadian_clock_KaiC-rel"/>
</dbReference>
<dbReference type="InterPro" id="IPR013503">
    <property type="entry name" value="Circadian_KaiC_bact"/>
</dbReference>
<dbReference type="InterPro" id="IPR030665">
    <property type="entry name" value="KaiC"/>
</dbReference>
<dbReference type="InterPro" id="IPR014774">
    <property type="entry name" value="KaiC-like_dom"/>
</dbReference>
<dbReference type="InterPro" id="IPR047222">
    <property type="entry name" value="KaiC_C"/>
</dbReference>
<dbReference type="InterPro" id="IPR010624">
    <property type="entry name" value="KaiC_dom"/>
</dbReference>
<dbReference type="InterPro" id="IPR047221">
    <property type="entry name" value="KaiC_N"/>
</dbReference>
<dbReference type="InterPro" id="IPR027417">
    <property type="entry name" value="P-loop_NTPase"/>
</dbReference>
<dbReference type="NCBIfam" id="TIGR02655">
    <property type="entry name" value="circ_KaiC"/>
    <property type="match status" value="1"/>
</dbReference>
<dbReference type="NCBIfam" id="NF006799">
    <property type="entry name" value="PRK09302.1"/>
    <property type="match status" value="1"/>
</dbReference>
<dbReference type="PANTHER" id="PTHR42926">
    <property type="match status" value="1"/>
</dbReference>
<dbReference type="PANTHER" id="PTHR42926:SF1">
    <property type="entry name" value="CIRCADIAN CLOCK OSCILLATOR PROTEIN KAIC 1"/>
    <property type="match status" value="1"/>
</dbReference>
<dbReference type="Pfam" id="PF06745">
    <property type="entry name" value="ATPase"/>
    <property type="match status" value="2"/>
</dbReference>
<dbReference type="PIRSF" id="PIRSF039117">
    <property type="entry name" value="KaiC"/>
    <property type="match status" value="1"/>
</dbReference>
<dbReference type="SUPFAM" id="SSF52540">
    <property type="entry name" value="P-loop containing nucleoside triphosphate hydrolases"/>
    <property type="match status" value="2"/>
</dbReference>
<dbReference type="PROSITE" id="PS51146">
    <property type="entry name" value="KAIC"/>
    <property type="match status" value="2"/>
</dbReference>
<evidence type="ECO:0000255" key="1">
    <source>
        <dbReference type="HAMAP-Rule" id="MF_01836"/>
    </source>
</evidence>
<evidence type="ECO:0000303" key="2">
    <source ref="1"/>
</evidence>
<evidence type="ECO:0000312" key="3">
    <source>
        <dbReference type="EMBL" id="BAB74585.1"/>
    </source>
</evidence>
<evidence type="ECO:0000312" key="4">
    <source>
        <dbReference type="EMBL" id="BAB85869.1"/>
    </source>
</evidence>
<gene>
    <name evidence="1 2" type="primary">kaiC</name>
    <name type="ordered locus">alr2886</name>
</gene>